<keyword id="KW-0067">ATP-binding</keyword>
<keyword id="KW-0963">Cytoplasm</keyword>
<keyword id="KW-0347">Helicase</keyword>
<keyword id="KW-0378">Hydrolase</keyword>
<keyword id="KW-0507">mRNA processing</keyword>
<keyword id="KW-0508">mRNA splicing</keyword>
<keyword id="KW-0509">mRNA transport</keyword>
<keyword id="KW-0866">Nonsense-mediated mRNA decay</keyword>
<keyword id="KW-0547">Nucleotide-binding</keyword>
<keyword id="KW-0539">Nucleus</keyword>
<keyword id="KW-1185">Reference proteome</keyword>
<keyword id="KW-0694">RNA-binding</keyword>
<keyword id="KW-0747">Spliceosome</keyword>
<keyword id="KW-0810">Translation regulation</keyword>
<keyword id="KW-0813">Transport</keyword>
<name>I4A3A_XENLA</name>
<gene>
    <name type="primary">eif4a3-a</name>
    <name type="synonym">ddx48-a</name>
</gene>
<accession>Q5U526</accession>
<feature type="chain" id="PRO_0000378560" description="Eukaryotic initiation factor 4A-III-A">
    <location>
        <begin position="1"/>
        <end position="415"/>
    </location>
</feature>
<feature type="domain" description="Helicase ATP-binding" evidence="3">
    <location>
        <begin position="73"/>
        <end position="243"/>
    </location>
</feature>
<feature type="domain" description="Helicase C-terminal" evidence="4">
    <location>
        <begin position="254"/>
        <end position="415"/>
    </location>
</feature>
<feature type="short sequence motif" description="Q motif">
    <location>
        <begin position="42"/>
        <end position="70"/>
    </location>
</feature>
<feature type="short sequence motif" description="DEAD box" evidence="5">
    <location>
        <begin position="191"/>
        <end position="194"/>
    </location>
</feature>
<feature type="binding site" evidence="1">
    <location>
        <position position="64"/>
    </location>
    <ligand>
        <name>ATP</name>
        <dbReference type="ChEBI" id="CHEBI:30616"/>
    </ligand>
</feature>
<feature type="binding site" evidence="1">
    <location>
        <position position="69"/>
    </location>
    <ligand>
        <name>ATP</name>
        <dbReference type="ChEBI" id="CHEBI:30616"/>
    </ligand>
</feature>
<feature type="binding site" evidence="3">
    <location>
        <begin position="86"/>
        <end position="93"/>
    </location>
    <ligand>
        <name>ATP</name>
        <dbReference type="ChEBI" id="CHEBI:30616"/>
    </ligand>
</feature>
<feature type="binding site" evidence="1">
    <location>
        <begin position="89"/>
        <end position="94"/>
    </location>
    <ligand>
        <name>ATP</name>
        <dbReference type="ChEBI" id="CHEBI:30616"/>
    </ligand>
</feature>
<feature type="binding site" evidence="1">
    <location>
        <position position="346"/>
    </location>
    <ligand>
        <name>ATP</name>
        <dbReference type="ChEBI" id="CHEBI:30616"/>
    </ligand>
</feature>
<feature type="binding site" evidence="1">
    <location>
        <begin position="371"/>
        <end position="375"/>
    </location>
    <ligand>
        <name>ATP</name>
        <dbReference type="ChEBI" id="CHEBI:30616"/>
    </ligand>
</feature>
<reference key="1">
    <citation type="submission" date="2004-10" db="EMBL/GenBank/DDBJ databases">
        <authorList>
            <consortium name="NIH - Xenopus Gene Collection (XGC) project"/>
        </authorList>
    </citation>
    <scope>NUCLEOTIDE SEQUENCE [LARGE SCALE MRNA]</scope>
    <source>
        <tissue>Embryo</tissue>
    </source>
</reference>
<protein>
    <recommendedName>
        <fullName>Eukaryotic initiation factor 4A-III-A</fullName>
        <shortName>eIF-4A-III-A</shortName>
        <shortName>eIF4A-III-A</shortName>
        <ecNumber evidence="1">3.6.4.13</ecNumber>
    </recommendedName>
    <alternativeName>
        <fullName>ATP-dependent RNA helicase DDX48-A</fullName>
    </alternativeName>
    <alternativeName>
        <fullName>ATP-dependent RNA helicase eIF4A-3-A</fullName>
    </alternativeName>
    <alternativeName>
        <fullName>DEAD box protein 48-A</fullName>
    </alternativeName>
    <alternativeName>
        <fullName>Eukaryotic translation initiation factor 4A isoform 3 A</fullName>
    </alternativeName>
</protein>
<comment type="function">
    <text evidence="1">ATP-dependent RNA helicase. Involved in pre-mRNA splicing as component of the spliceosome. Core component of the splicing-dependent multiprotein exon junction complex (EJC) deposited at splice junctions on mRNAs. The EJC is a dynamic structure consisting of core proteins and several peripheral nuclear and cytoplasmic associated factors that join the complex only transiently either during EJC assembly or during subsequent mRNA metabolism. The EJC marks the position of the exon-exon junction in the mature mRNA for the gene expression machinery and the core components remain bound to spliced mRNAs throughout all stages of mRNA metabolism thereby influencing downstream processes including nuclear mRNA export, subcellular mRNA localization, translation efficiency and nonsense-mediated mRNA decay (NMD). Binds spliced mRNA in sequence-independent manner, 20-24 nucleotides upstream of mRNA exon-exon junctions (By similarity). Involved in craniofacial development (By similarity).</text>
</comment>
<comment type="catalytic activity">
    <reaction evidence="1">
        <text>ATP + H2O = ADP + phosphate + H(+)</text>
        <dbReference type="Rhea" id="RHEA:13065"/>
        <dbReference type="ChEBI" id="CHEBI:15377"/>
        <dbReference type="ChEBI" id="CHEBI:15378"/>
        <dbReference type="ChEBI" id="CHEBI:30616"/>
        <dbReference type="ChEBI" id="CHEBI:43474"/>
        <dbReference type="ChEBI" id="CHEBI:456216"/>
        <dbReference type="EC" id="3.6.4.13"/>
    </reaction>
</comment>
<comment type="subunit">
    <text evidence="1">Identified in the spliceosome C complex. Part of the mRNA splicing-dependent exon junction complex (EJC) complex; the core complex contains casc3, eif4a3, magoh and rbm8a.</text>
</comment>
<comment type="subcellular location">
    <subcellularLocation>
        <location evidence="2">Nucleus</location>
    </subcellularLocation>
    <subcellularLocation>
        <location evidence="1">Nucleus speckle</location>
    </subcellularLocation>
    <subcellularLocation>
        <location evidence="2">Cytoplasm</location>
    </subcellularLocation>
    <text evidence="2">Nucleocytoplasmic shuttling protein. Travels to the cytoplasm as part of the exon junction complex (EJC) bound to mRNA.</text>
</comment>
<comment type="similarity">
    <text evidence="5">Belongs to the DEAD box helicase family. eIF4A subfamily.</text>
</comment>
<proteinExistence type="evidence at transcript level"/>
<organism>
    <name type="scientific">Xenopus laevis</name>
    <name type="common">African clawed frog</name>
    <dbReference type="NCBI Taxonomy" id="8355"/>
    <lineage>
        <taxon>Eukaryota</taxon>
        <taxon>Metazoa</taxon>
        <taxon>Chordata</taxon>
        <taxon>Craniata</taxon>
        <taxon>Vertebrata</taxon>
        <taxon>Euteleostomi</taxon>
        <taxon>Amphibia</taxon>
        <taxon>Batrachia</taxon>
        <taxon>Anura</taxon>
        <taxon>Pipoidea</taxon>
        <taxon>Pipidae</taxon>
        <taxon>Xenopodinae</taxon>
        <taxon>Xenopus</taxon>
        <taxon>Xenopus</taxon>
    </lineage>
</organism>
<dbReference type="EC" id="3.6.4.13" evidence="1"/>
<dbReference type="EMBL" id="BC084859">
    <property type="protein sequence ID" value="AAH84859.1"/>
    <property type="molecule type" value="mRNA"/>
</dbReference>
<dbReference type="SMR" id="Q5U526"/>
<dbReference type="IntAct" id="Q5U526">
    <property type="interactions" value="1"/>
</dbReference>
<dbReference type="Proteomes" id="UP000186698">
    <property type="component" value="Unplaced"/>
</dbReference>
<dbReference type="GO" id="GO:0071013">
    <property type="term" value="C:catalytic step 2 spliceosome"/>
    <property type="evidence" value="ECO:0000318"/>
    <property type="project" value="GO_Central"/>
</dbReference>
<dbReference type="GO" id="GO:0005737">
    <property type="term" value="C:cytoplasm"/>
    <property type="evidence" value="ECO:0007669"/>
    <property type="project" value="UniProtKB-SubCell"/>
</dbReference>
<dbReference type="GO" id="GO:0016607">
    <property type="term" value="C:nuclear speck"/>
    <property type="evidence" value="ECO:0007669"/>
    <property type="project" value="UniProtKB-SubCell"/>
</dbReference>
<dbReference type="GO" id="GO:0005730">
    <property type="term" value="C:nucleolus"/>
    <property type="evidence" value="ECO:0000318"/>
    <property type="project" value="GO_Central"/>
</dbReference>
<dbReference type="GO" id="GO:0005524">
    <property type="term" value="F:ATP binding"/>
    <property type="evidence" value="ECO:0007669"/>
    <property type="project" value="UniProtKB-KW"/>
</dbReference>
<dbReference type="GO" id="GO:0016887">
    <property type="term" value="F:ATP hydrolysis activity"/>
    <property type="evidence" value="ECO:0007669"/>
    <property type="project" value="RHEA"/>
</dbReference>
<dbReference type="GO" id="GO:0003729">
    <property type="term" value="F:mRNA binding"/>
    <property type="evidence" value="ECO:0000318"/>
    <property type="project" value="GO_Central"/>
</dbReference>
<dbReference type="GO" id="GO:0003724">
    <property type="term" value="F:RNA helicase activity"/>
    <property type="evidence" value="ECO:0000318"/>
    <property type="project" value="GO_Central"/>
</dbReference>
<dbReference type="GO" id="GO:0000398">
    <property type="term" value="P:mRNA splicing, via spliceosome"/>
    <property type="evidence" value="ECO:0000318"/>
    <property type="project" value="GO_Central"/>
</dbReference>
<dbReference type="GO" id="GO:0051028">
    <property type="term" value="P:mRNA transport"/>
    <property type="evidence" value="ECO:0007669"/>
    <property type="project" value="UniProtKB-KW"/>
</dbReference>
<dbReference type="GO" id="GO:0000184">
    <property type="term" value="P:nuclear-transcribed mRNA catabolic process, nonsense-mediated decay"/>
    <property type="evidence" value="ECO:0007669"/>
    <property type="project" value="UniProtKB-KW"/>
</dbReference>
<dbReference type="GO" id="GO:0000381">
    <property type="term" value="P:regulation of alternative mRNA splicing, via spliceosome"/>
    <property type="evidence" value="ECO:0000250"/>
    <property type="project" value="UniProtKB"/>
</dbReference>
<dbReference type="GO" id="GO:0006417">
    <property type="term" value="P:regulation of translation"/>
    <property type="evidence" value="ECO:0007669"/>
    <property type="project" value="UniProtKB-KW"/>
</dbReference>
<dbReference type="CDD" id="cd18045">
    <property type="entry name" value="DEADc_EIF4AIII_DDX48"/>
    <property type="match status" value="1"/>
</dbReference>
<dbReference type="CDD" id="cd18787">
    <property type="entry name" value="SF2_C_DEAD"/>
    <property type="match status" value="1"/>
</dbReference>
<dbReference type="FunFam" id="3.40.50.300:FF:000031">
    <property type="entry name" value="Eukaryotic initiation factor 4A-III"/>
    <property type="match status" value="1"/>
</dbReference>
<dbReference type="FunFam" id="3.40.50.300:FF:000498">
    <property type="entry name" value="Eukaryotic initiation factor 4A-III"/>
    <property type="match status" value="1"/>
</dbReference>
<dbReference type="Gene3D" id="3.40.50.300">
    <property type="entry name" value="P-loop containing nucleotide triphosphate hydrolases"/>
    <property type="match status" value="2"/>
</dbReference>
<dbReference type="InterPro" id="IPR011545">
    <property type="entry name" value="DEAD/DEAH_box_helicase_dom"/>
</dbReference>
<dbReference type="InterPro" id="IPR014001">
    <property type="entry name" value="Helicase_ATP-bd"/>
</dbReference>
<dbReference type="InterPro" id="IPR001650">
    <property type="entry name" value="Helicase_C-like"/>
</dbReference>
<dbReference type="InterPro" id="IPR027417">
    <property type="entry name" value="P-loop_NTPase"/>
</dbReference>
<dbReference type="InterPro" id="IPR000629">
    <property type="entry name" value="RNA-helicase_DEAD-box_CS"/>
</dbReference>
<dbReference type="InterPro" id="IPR014014">
    <property type="entry name" value="RNA_helicase_DEAD_Q_motif"/>
</dbReference>
<dbReference type="PANTHER" id="PTHR47958">
    <property type="entry name" value="ATP-DEPENDENT RNA HELICASE DBP3"/>
    <property type="match status" value="1"/>
</dbReference>
<dbReference type="Pfam" id="PF00270">
    <property type="entry name" value="DEAD"/>
    <property type="match status" value="1"/>
</dbReference>
<dbReference type="Pfam" id="PF00271">
    <property type="entry name" value="Helicase_C"/>
    <property type="match status" value="1"/>
</dbReference>
<dbReference type="SMART" id="SM00487">
    <property type="entry name" value="DEXDc"/>
    <property type="match status" value="1"/>
</dbReference>
<dbReference type="SMART" id="SM00490">
    <property type="entry name" value="HELICc"/>
    <property type="match status" value="1"/>
</dbReference>
<dbReference type="SUPFAM" id="SSF52540">
    <property type="entry name" value="P-loop containing nucleoside triphosphate hydrolases"/>
    <property type="match status" value="1"/>
</dbReference>
<dbReference type="PROSITE" id="PS00039">
    <property type="entry name" value="DEAD_ATP_HELICASE"/>
    <property type="match status" value="1"/>
</dbReference>
<dbReference type="PROSITE" id="PS51192">
    <property type="entry name" value="HELICASE_ATP_BIND_1"/>
    <property type="match status" value="1"/>
</dbReference>
<dbReference type="PROSITE" id="PS51194">
    <property type="entry name" value="HELICASE_CTER"/>
    <property type="match status" value="1"/>
</dbReference>
<dbReference type="PROSITE" id="PS51195">
    <property type="entry name" value="Q_MOTIF"/>
    <property type="match status" value="1"/>
</dbReference>
<evidence type="ECO:0000250" key="1">
    <source>
        <dbReference type="UniProtKB" id="P38919"/>
    </source>
</evidence>
<evidence type="ECO:0000250" key="2">
    <source>
        <dbReference type="UniProtKB" id="Q3B8Q2"/>
    </source>
</evidence>
<evidence type="ECO:0000255" key="3">
    <source>
        <dbReference type="PROSITE-ProRule" id="PRU00541"/>
    </source>
</evidence>
<evidence type="ECO:0000255" key="4">
    <source>
        <dbReference type="PROSITE-ProRule" id="PRU00542"/>
    </source>
</evidence>
<evidence type="ECO:0000305" key="5"/>
<sequence>MAAAAVAGVAGLTSGAGRKRLLREEDMTKVEFETSEEVDVTPTFDTMGLREDLLRGIYAYGFEKPSAIQQRAIKQIIKGRDVIAQSQSGTGKTATFCVSVLQCLDIQVRETQALILAPTRELAGQIQKVLLALGDYMNVQCHACIGGTNVGEDIRKLDYGQHVVAGTPGRVFDMIRRRSLRTRAIKMLVLDEADEMLNKGFKEQIYDVYRYLPPATQVCLISATLPHEILEMTNKFMTDPIRILVKRDELTLEGIKQFFVAVEREEWKFDTLCDLYDTLTITQAVIFCNTKRKVDWLTEKMREANFTVSSMHGDMPQKERESIMKEFRSGASRVLISTDVWARGLDVPQVSLIINYDLPNNRELYIHRIGRSGRYGGKGVAINFVKNDDIRILRDIEQYYSTQIDEMPMNVADLI</sequence>